<gene>
    <name type="ORF">MGG_04210</name>
</gene>
<reference key="1">
    <citation type="journal article" date="2005" name="Nature">
        <title>The genome sequence of the rice blast fungus Magnaporthe grisea.</title>
        <authorList>
            <person name="Dean R.A."/>
            <person name="Talbot N.J."/>
            <person name="Ebbole D.J."/>
            <person name="Farman M.L."/>
            <person name="Mitchell T.K."/>
            <person name="Orbach M.J."/>
            <person name="Thon M.R."/>
            <person name="Kulkarni R."/>
            <person name="Xu J.-R."/>
            <person name="Pan H."/>
            <person name="Read N.D."/>
            <person name="Lee Y.-H."/>
            <person name="Carbone I."/>
            <person name="Brown D."/>
            <person name="Oh Y.Y."/>
            <person name="Donofrio N."/>
            <person name="Jeong J.S."/>
            <person name="Soanes D.M."/>
            <person name="Djonovic S."/>
            <person name="Kolomiets E."/>
            <person name="Rehmeyer C."/>
            <person name="Li W."/>
            <person name="Harding M."/>
            <person name="Kim S."/>
            <person name="Lebrun M.-H."/>
            <person name="Bohnert H."/>
            <person name="Coughlan S."/>
            <person name="Butler J."/>
            <person name="Calvo S.E."/>
            <person name="Ma L.-J."/>
            <person name="Nicol R."/>
            <person name="Purcell S."/>
            <person name="Nusbaum C."/>
            <person name="Galagan J.E."/>
            <person name="Birren B.W."/>
        </authorList>
    </citation>
    <scope>NUCLEOTIDE SEQUENCE [LARGE SCALE GENOMIC DNA]</scope>
    <source>
        <strain>70-15 / ATCC MYA-4617 / FGSC 8958</strain>
    </source>
</reference>
<evidence type="ECO:0000255" key="1">
    <source>
        <dbReference type="HAMAP-Rule" id="MF_03124"/>
    </source>
</evidence>
<feature type="chain" id="PRO_0000398062" description="Arginine biosynthesis bifunctional protein ArgJ alpha chain" evidence="1">
    <location>
        <begin position="1"/>
        <end position="230"/>
    </location>
</feature>
<feature type="chain" id="PRO_0000398063" description="Arginine biosynthesis bifunctional protein ArgJ beta chain" evidence="1">
    <location>
        <begin position="231"/>
        <end position="464"/>
    </location>
</feature>
<feature type="active site" description="Nucleophile" evidence="1">
    <location>
        <position position="231"/>
    </location>
</feature>
<feature type="binding site" evidence="1">
    <location>
        <position position="191"/>
    </location>
    <ligand>
        <name>substrate</name>
    </ligand>
</feature>
<feature type="binding site" evidence="1">
    <location>
        <position position="220"/>
    </location>
    <ligand>
        <name>substrate</name>
    </ligand>
</feature>
<feature type="binding site" evidence="1">
    <location>
        <position position="231"/>
    </location>
    <ligand>
        <name>substrate</name>
    </ligand>
</feature>
<feature type="binding site" evidence="1">
    <location>
        <position position="318"/>
    </location>
    <ligand>
        <name>substrate</name>
    </ligand>
</feature>
<feature type="binding site" evidence="1">
    <location>
        <position position="459"/>
    </location>
    <ligand>
        <name>substrate</name>
    </ligand>
</feature>
<feature type="binding site" evidence="1">
    <location>
        <position position="464"/>
    </location>
    <ligand>
        <name>substrate</name>
    </ligand>
</feature>
<feature type="site" description="Involved in the stabilization of negative charge on the oxyanion by the formation of the oxyanion hole" evidence="1">
    <location>
        <position position="152"/>
    </location>
</feature>
<feature type="site" description="Involved in the stabilization of negative charge on the oxyanion by the formation of the oxyanion hole" evidence="1">
    <location>
        <position position="153"/>
    </location>
</feature>
<feature type="site" description="Cleavage; by autolysis" evidence="1">
    <location>
        <begin position="230"/>
        <end position="231"/>
    </location>
</feature>
<comment type="function">
    <text evidence="1">Catalyzes two activities which are involved in the cyclic version of arginine biosynthesis: the synthesis of acetylglutamate from glutamate and acetyl-CoA, and of ornithine by transacetylation between acetylornithine and glutamate.</text>
</comment>
<comment type="catalytic activity">
    <reaction evidence="1">
        <text>N(2)-acetyl-L-ornithine + L-glutamate = N-acetyl-L-glutamate + L-ornithine</text>
        <dbReference type="Rhea" id="RHEA:15349"/>
        <dbReference type="ChEBI" id="CHEBI:29985"/>
        <dbReference type="ChEBI" id="CHEBI:44337"/>
        <dbReference type="ChEBI" id="CHEBI:46911"/>
        <dbReference type="ChEBI" id="CHEBI:57805"/>
        <dbReference type="EC" id="2.3.1.35"/>
    </reaction>
</comment>
<comment type="catalytic activity">
    <reaction evidence="1">
        <text>L-glutamate + acetyl-CoA = N-acetyl-L-glutamate + CoA + H(+)</text>
        <dbReference type="Rhea" id="RHEA:24292"/>
        <dbReference type="ChEBI" id="CHEBI:15378"/>
        <dbReference type="ChEBI" id="CHEBI:29985"/>
        <dbReference type="ChEBI" id="CHEBI:44337"/>
        <dbReference type="ChEBI" id="CHEBI:57287"/>
        <dbReference type="ChEBI" id="CHEBI:57288"/>
        <dbReference type="EC" id="2.3.1.1"/>
    </reaction>
</comment>
<comment type="pathway">
    <text evidence="1">Amino-acid biosynthesis; L-arginine biosynthesis; L-ornithine and N-acetyl-L-glutamate from L-glutamate and N(2)-acetyl-L-ornithine (cyclic): step 1/1.</text>
</comment>
<comment type="pathway">
    <text evidence="1">Amino-acid biosynthesis; L-arginine biosynthesis; N(2)-acetyl-L-ornithine from L-glutamate: step 1/4.</text>
</comment>
<comment type="subunit">
    <text evidence="1">Heterodimer of an alpha and a beta chain.</text>
</comment>
<comment type="subcellular location">
    <subcellularLocation>
        <location evidence="1">Mitochondrion matrix</location>
    </subcellularLocation>
</comment>
<comment type="PTM">
    <text evidence="1">The alpha and beta chains are autoproteolytically processed from a single precursor protein within the mitochondrion.</text>
</comment>
<comment type="miscellaneous">
    <text evidence="1">This protein may be expected to contain an N-terminal transit peptide but none has been predicted.</text>
</comment>
<comment type="similarity">
    <text evidence="1">Belongs to the ArgJ family.</text>
</comment>
<dbReference type="EC" id="2.3.1.35" evidence="1"/>
<dbReference type="EC" id="2.3.1.1" evidence="1"/>
<dbReference type="EMBL" id="CM001236">
    <property type="protein sequence ID" value="EHA47241.1"/>
    <property type="molecule type" value="Genomic_DNA"/>
</dbReference>
<dbReference type="RefSeq" id="XP_003719608.1">
    <property type="nucleotide sequence ID" value="XM_003719560.1"/>
</dbReference>
<dbReference type="SMR" id="A4R5F6"/>
<dbReference type="FunCoup" id="A4R5F6">
    <property type="interactions" value="277"/>
</dbReference>
<dbReference type="STRING" id="242507.A4R5F6"/>
<dbReference type="MEROPS" id="T05.001"/>
<dbReference type="EnsemblFungi" id="MGG_04210T0">
    <property type="protein sequence ID" value="MGG_04210T0"/>
    <property type="gene ID" value="MGG_04210"/>
</dbReference>
<dbReference type="GeneID" id="2677436"/>
<dbReference type="KEGG" id="mgr:MGG_04210"/>
<dbReference type="VEuPathDB" id="FungiDB:MGG_04210"/>
<dbReference type="eggNOG" id="KOG2786">
    <property type="taxonomic scope" value="Eukaryota"/>
</dbReference>
<dbReference type="HOGENOM" id="CLU_027172_1_0_1"/>
<dbReference type="InParanoid" id="A4R5F6"/>
<dbReference type="OMA" id="WGRIVMA"/>
<dbReference type="OrthoDB" id="4199794at2759"/>
<dbReference type="UniPathway" id="UPA00068">
    <property type="reaction ID" value="UER00106"/>
</dbReference>
<dbReference type="UniPathway" id="UPA00068">
    <property type="reaction ID" value="UER00111"/>
</dbReference>
<dbReference type="PHI-base" id="PHI:5234"/>
<dbReference type="Proteomes" id="UP000009058">
    <property type="component" value="Chromosome 6"/>
</dbReference>
<dbReference type="GO" id="GO:0005759">
    <property type="term" value="C:mitochondrial matrix"/>
    <property type="evidence" value="ECO:0007669"/>
    <property type="project" value="UniProtKB-SubCell"/>
</dbReference>
<dbReference type="GO" id="GO:0004358">
    <property type="term" value="F:glutamate N-acetyltransferase activity"/>
    <property type="evidence" value="ECO:0007669"/>
    <property type="project" value="UniProtKB-UniRule"/>
</dbReference>
<dbReference type="GO" id="GO:0004042">
    <property type="term" value="F:L-glutamate N-acetyltransferase activity"/>
    <property type="evidence" value="ECO:0007669"/>
    <property type="project" value="UniProtKB-UniRule"/>
</dbReference>
<dbReference type="GO" id="GO:0006526">
    <property type="term" value="P:L-arginine biosynthetic process"/>
    <property type="evidence" value="ECO:0007669"/>
    <property type="project" value="UniProtKB-UniRule"/>
</dbReference>
<dbReference type="GO" id="GO:0006592">
    <property type="term" value="P:ornithine biosynthetic process"/>
    <property type="evidence" value="ECO:0007669"/>
    <property type="project" value="EnsemblFungi"/>
</dbReference>
<dbReference type="CDD" id="cd02152">
    <property type="entry name" value="OAT"/>
    <property type="match status" value="1"/>
</dbReference>
<dbReference type="FunFam" id="3.60.70.12:FF:000001">
    <property type="entry name" value="Arginine biosynthesis bifunctional protein ArgJ, chloroplastic"/>
    <property type="match status" value="1"/>
</dbReference>
<dbReference type="FunFam" id="3.10.20.340:FF:000002">
    <property type="entry name" value="Arginine biosynthesis bifunctional protein ArgJ, mitochondrial"/>
    <property type="match status" value="1"/>
</dbReference>
<dbReference type="FunFam" id="3.30.2330.10:FF:000001">
    <property type="entry name" value="Arginine biosynthesis bifunctional protein ArgJ, mitochondrial"/>
    <property type="match status" value="1"/>
</dbReference>
<dbReference type="Gene3D" id="3.30.2330.10">
    <property type="entry name" value="arginine biosynthesis bifunctional protein suprefamily"/>
    <property type="match status" value="1"/>
</dbReference>
<dbReference type="Gene3D" id="3.10.20.340">
    <property type="entry name" value="ArgJ beta chain, C-terminal domain"/>
    <property type="match status" value="1"/>
</dbReference>
<dbReference type="Gene3D" id="3.60.70.12">
    <property type="entry name" value="L-amino peptidase D-ALA esterase/amidase"/>
    <property type="match status" value="1"/>
</dbReference>
<dbReference type="HAMAP" id="MF_01106">
    <property type="entry name" value="ArgJ"/>
    <property type="match status" value="1"/>
</dbReference>
<dbReference type="InterPro" id="IPR002813">
    <property type="entry name" value="Arg_biosynth_ArgJ"/>
</dbReference>
<dbReference type="InterPro" id="IPR016117">
    <property type="entry name" value="ArgJ-like_dom_sf"/>
</dbReference>
<dbReference type="InterPro" id="IPR042195">
    <property type="entry name" value="ArgJ_beta_C"/>
</dbReference>
<dbReference type="NCBIfam" id="TIGR00120">
    <property type="entry name" value="ArgJ"/>
    <property type="match status" value="1"/>
</dbReference>
<dbReference type="NCBIfam" id="NF003802">
    <property type="entry name" value="PRK05388.1"/>
    <property type="match status" value="1"/>
</dbReference>
<dbReference type="PANTHER" id="PTHR23100">
    <property type="entry name" value="ARGININE BIOSYNTHESIS BIFUNCTIONAL PROTEIN ARGJ"/>
    <property type="match status" value="1"/>
</dbReference>
<dbReference type="PANTHER" id="PTHR23100:SF0">
    <property type="entry name" value="ARGININE BIOSYNTHESIS BIFUNCTIONAL PROTEIN ARGJ, MITOCHONDRIAL"/>
    <property type="match status" value="1"/>
</dbReference>
<dbReference type="Pfam" id="PF01960">
    <property type="entry name" value="ArgJ"/>
    <property type="match status" value="1"/>
</dbReference>
<dbReference type="SUPFAM" id="SSF56266">
    <property type="entry name" value="DmpA/ArgJ-like"/>
    <property type="match status" value="1"/>
</dbReference>
<organism>
    <name type="scientific">Pyricularia oryzae (strain 70-15 / ATCC MYA-4617 / FGSC 8958)</name>
    <name type="common">Rice blast fungus</name>
    <name type="synonym">Magnaporthe oryzae</name>
    <dbReference type="NCBI Taxonomy" id="242507"/>
    <lineage>
        <taxon>Eukaryota</taxon>
        <taxon>Fungi</taxon>
        <taxon>Dikarya</taxon>
        <taxon>Ascomycota</taxon>
        <taxon>Pezizomycotina</taxon>
        <taxon>Sordariomycetes</taxon>
        <taxon>Sordariomycetidae</taxon>
        <taxon>Magnaporthales</taxon>
        <taxon>Pyriculariaceae</taxon>
        <taxon>Pyricularia</taxon>
    </lineage>
</organism>
<keyword id="KW-0012">Acyltransferase</keyword>
<keyword id="KW-0028">Amino-acid biosynthesis</keyword>
<keyword id="KW-0055">Arginine biosynthesis</keyword>
<keyword id="KW-0068">Autocatalytic cleavage</keyword>
<keyword id="KW-0496">Mitochondrion</keyword>
<keyword id="KW-0511">Multifunctional enzyme</keyword>
<keyword id="KW-1185">Reference proteome</keyword>
<keyword id="KW-0808">Transferase</keyword>
<accession>A4R5F6</accession>
<accession>G4NF47</accession>
<protein>
    <recommendedName>
        <fullName evidence="1">Arginine biosynthesis bifunctional protein ArgJ, mitochondrial</fullName>
    </recommendedName>
    <domain>
        <recommendedName>
            <fullName evidence="1">Glutamate N-acetyltransferase</fullName>
            <shortName evidence="1">GAT</shortName>
            <ecNumber evidence="1">2.3.1.35</ecNumber>
        </recommendedName>
        <alternativeName>
            <fullName evidence="1">Ornithine acetyltransferase</fullName>
            <shortName evidence="1">OATase</shortName>
        </alternativeName>
        <alternativeName>
            <fullName evidence="1">Ornithine transacetylase</fullName>
        </alternativeName>
    </domain>
    <domain>
        <recommendedName>
            <fullName evidence="1">Amino-acid acetyltransferase</fullName>
            <ecNumber evidence="1">2.3.1.1</ecNumber>
        </recommendedName>
        <alternativeName>
            <fullName evidence="1">N-acetylglutamate synthase</fullName>
            <shortName evidence="1">AGS</shortName>
        </alternativeName>
    </domain>
    <component>
        <recommendedName>
            <fullName evidence="1">Arginine biosynthesis bifunctional protein ArgJ alpha chain</fullName>
        </recommendedName>
    </component>
    <component>
        <recommendedName>
            <fullName evidence="1">Arginine biosynthesis bifunctional protein ArgJ beta chain</fullName>
        </recommendedName>
    </component>
</protein>
<proteinExistence type="inferred from homology"/>
<sequence length="464" mass="48955">MASKSTSTAVWGQLRHLAQQQTRCYSATADSIPASKKKYVPTKGVYPKGFRVSGTIVGVKPGNTTKPDLAFVTSDTPCAAAAVFTKNRFQAAPVTFSRDLLKKKGNSGVNGVIINSGCANAVTGKGGLEDAESMAREADRCLGGDGTIVMSTGVIGQRLPIKRILDNVPAAHSRLGSSHDHWLSCATAICTTDTFPKLMSRSFTLPSSPSVEYRIAGMTKGAGMIHPNMATLLGVIATDAPIAPAVLPSLLKNAVDRSFNSITIDGDTSTNDTVALLANGAAGGKEIASESSPDFAAFRDVLNVFSEDLAKLIVRDGEGATKFVTIRVVESDSEETAKKVASTIARSPLVKTALYGKDANWGRILCATGYALISEPGSAAVAEVSDKIVPEKTNVSFVPTDGTAELKLLVDGEPEQVDEVRAAEILKAEDLEILVRLGTGKAEGTYWTCDFSHEYVTINGDYRT</sequence>
<name>ARGJ_PYRO7</name>